<organism>
    <name type="scientific">Arabidopsis thaliana</name>
    <name type="common">Mouse-ear cress</name>
    <dbReference type="NCBI Taxonomy" id="3702"/>
    <lineage>
        <taxon>Eukaryota</taxon>
        <taxon>Viridiplantae</taxon>
        <taxon>Streptophyta</taxon>
        <taxon>Embryophyta</taxon>
        <taxon>Tracheophyta</taxon>
        <taxon>Spermatophyta</taxon>
        <taxon>Magnoliopsida</taxon>
        <taxon>eudicotyledons</taxon>
        <taxon>Gunneridae</taxon>
        <taxon>Pentapetalae</taxon>
        <taxon>rosids</taxon>
        <taxon>malvids</taxon>
        <taxon>Brassicales</taxon>
        <taxon>Brassicaceae</taxon>
        <taxon>Camelineae</taxon>
        <taxon>Arabidopsis</taxon>
    </lineage>
</organism>
<name>PTL_ARATH</name>
<dbReference type="EMBL" id="AY555728">
    <property type="protein sequence ID" value="AAS64746.1"/>
    <property type="molecule type" value="mRNA"/>
</dbReference>
<dbReference type="EMBL" id="AL162506">
    <property type="protein sequence ID" value="CAB82933.1"/>
    <property type="molecule type" value="Genomic_DNA"/>
</dbReference>
<dbReference type="EMBL" id="CP002688">
    <property type="protein sequence ID" value="AED90641.1"/>
    <property type="molecule type" value="Genomic_DNA"/>
</dbReference>
<dbReference type="PIR" id="T48395">
    <property type="entry name" value="T48395"/>
</dbReference>
<dbReference type="RefSeq" id="NP_195988.1">
    <property type="nucleotide sequence ID" value="NM_120449.3"/>
</dbReference>
<dbReference type="SMR" id="Q9LZS0"/>
<dbReference type="BioGRID" id="17033">
    <property type="interactions" value="3"/>
</dbReference>
<dbReference type="FunCoup" id="Q9LZS0">
    <property type="interactions" value="10"/>
</dbReference>
<dbReference type="STRING" id="3702.Q9LZS0"/>
<dbReference type="PaxDb" id="3702-AT5G03680.1"/>
<dbReference type="ProteomicsDB" id="226433"/>
<dbReference type="EnsemblPlants" id="AT5G03680.1">
    <property type="protein sequence ID" value="AT5G03680.1"/>
    <property type="gene ID" value="AT5G03680"/>
</dbReference>
<dbReference type="GeneID" id="831757"/>
<dbReference type="Gramene" id="AT5G03680.1">
    <property type="protein sequence ID" value="AT5G03680.1"/>
    <property type="gene ID" value="AT5G03680"/>
</dbReference>
<dbReference type="KEGG" id="ath:AT5G03680"/>
<dbReference type="Araport" id="AT5G03680"/>
<dbReference type="TAIR" id="AT5G03680">
    <property type="gene designation" value="PTL"/>
</dbReference>
<dbReference type="eggNOG" id="KOG4282">
    <property type="taxonomic scope" value="Eukaryota"/>
</dbReference>
<dbReference type="HOGENOM" id="CLU_035771_0_0_1"/>
<dbReference type="InParanoid" id="Q9LZS0"/>
<dbReference type="OMA" id="IERQDVW"/>
<dbReference type="PhylomeDB" id="Q9LZS0"/>
<dbReference type="PRO" id="PR:Q9LZS0"/>
<dbReference type="Proteomes" id="UP000006548">
    <property type="component" value="Chromosome 5"/>
</dbReference>
<dbReference type="ExpressionAtlas" id="Q9LZS0">
    <property type="expression patterns" value="baseline and differential"/>
</dbReference>
<dbReference type="GO" id="GO:0005634">
    <property type="term" value="C:nucleus"/>
    <property type="evidence" value="ECO:0000314"/>
    <property type="project" value="TAIR"/>
</dbReference>
<dbReference type="GO" id="GO:0003677">
    <property type="term" value="F:DNA binding"/>
    <property type="evidence" value="ECO:0000314"/>
    <property type="project" value="TAIR"/>
</dbReference>
<dbReference type="GO" id="GO:0003700">
    <property type="term" value="F:DNA-binding transcription factor activity"/>
    <property type="evidence" value="ECO:0000250"/>
    <property type="project" value="TAIR"/>
</dbReference>
<dbReference type="GO" id="GO:0019900">
    <property type="term" value="F:kinase binding"/>
    <property type="evidence" value="ECO:0000353"/>
    <property type="project" value="UniProtKB"/>
</dbReference>
<dbReference type="GO" id="GO:0042803">
    <property type="term" value="F:protein homodimerization activity"/>
    <property type="evidence" value="ECO:0000314"/>
    <property type="project" value="TAIR"/>
</dbReference>
<dbReference type="GO" id="GO:0000976">
    <property type="term" value="F:transcription cis-regulatory region binding"/>
    <property type="evidence" value="ECO:0000353"/>
    <property type="project" value="TAIR"/>
</dbReference>
<dbReference type="GO" id="GO:0048498">
    <property type="term" value="P:establishment of petal orientation"/>
    <property type="evidence" value="ECO:0000315"/>
    <property type="project" value="TAIR"/>
</dbReference>
<dbReference type="GO" id="GO:0046621">
    <property type="term" value="P:negative regulation of organ growth"/>
    <property type="evidence" value="ECO:0000315"/>
    <property type="project" value="TAIR"/>
</dbReference>
<dbReference type="GO" id="GO:0090428">
    <property type="term" value="P:perianth development"/>
    <property type="evidence" value="ECO:0000315"/>
    <property type="project" value="TAIR"/>
</dbReference>
<dbReference type="GO" id="GO:0048441">
    <property type="term" value="P:petal development"/>
    <property type="evidence" value="ECO:0000315"/>
    <property type="project" value="TAIR"/>
</dbReference>
<dbReference type="GO" id="GO:0006355">
    <property type="term" value="P:regulation of DNA-templated transcription"/>
    <property type="evidence" value="ECO:0000314"/>
    <property type="project" value="TAIR"/>
</dbReference>
<dbReference type="GO" id="GO:0009909">
    <property type="term" value="P:regulation of flower development"/>
    <property type="evidence" value="ECO:0000315"/>
    <property type="project" value="TAIR"/>
</dbReference>
<dbReference type="GO" id="GO:0048442">
    <property type="term" value="P:sepal development"/>
    <property type="evidence" value="ECO:0000316"/>
    <property type="project" value="TAIR"/>
</dbReference>
<dbReference type="CDD" id="cd12203">
    <property type="entry name" value="GT1"/>
    <property type="match status" value="2"/>
</dbReference>
<dbReference type="FunFam" id="1.10.10.60:FF:000061">
    <property type="entry name" value="Trihelix transcription factor GT-2"/>
    <property type="match status" value="1"/>
</dbReference>
<dbReference type="FunFam" id="1.10.10.60:FF:000342">
    <property type="entry name" value="trihelix transcription factor PTL-like"/>
    <property type="match status" value="1"/>
</dbReference>
<dbReference type="Gene3D" id="1.10.10.60">
    <property type="entry name" value="Homeodomain-like"/>
    <property type="match status" value="2"/>
</dbReference>
<dbReference type="InterPro" id="IPR044822">
    <property type="entry name" value="Myb_DNA-bind_4"/>
</dbReference>
<dbReference type="InterPro" id="IPR001005">
    <property type="entry name" value="SANT/Myb"/>
</dbReference>
<dbReference type="PANTHER" id="PTHR21654">
    <property type="entry name" value="FI21293P1"/>
    <property type="match status" value="1"/>
</dbReference>
<dbReference type="PANTHER" id="PTHR21654:SF60">
    <property type="entry name" value="TRIHELIX TRANSCRIPTION FACTOR PTL"/>
    <property type="match status" value="1"/>
</dbReference>
<dbReference type="Pfam" id="PF13837">
    <property type="entry name" value="Myb_DNA-bind_4"/>
    <property type="match status" value="2"/>
</dbReference>
<dbReference type="PROSITE" id="PS50090">
    <property type="entry name" value="MYB_LIKE"/>
    <property type="match status" value="2"/>
</dbReference>
<reference key="1">
    <citation type="journal article" date="2004" name="Development">
        <title>PETAL LOSS, a trihelix transcription factor gene, regulates perianth architecture in the Arabidopsis flower.</title>
        <authorList>
            <person name="Brewer P.B."/>
            <person name="Howles P.A."/>
            <person name="Dorian K."/>
            <person name="Griffith M.E."/>
            <person name="Ishida T."/>
            <person name="Kaplan-Levy R.N."/>
            <person name="Kilinc A."/>
            <person name="Smyth D.R."/>
        </authorList>
    </citation>
    <scope>NUCLEOTIDE SEQUENCE [MRNA]</scope>
    <scope>FUNCTION</scope>
    <scope>DISRUPTION PHENOTYPE</scope>
    <scope>TISSUE SPECIFICITY</scope>
    <scope>DEVELOPMENTAL STAGE</scope>
    <scope>INDUCTION BY PINOID</scope>
    <source>
        <strain>cv. C24</strain>
        <strain>cv. Columbia</strain>
        <strain>cv. Landsberg erecta</strain>
        <tissue>Flower</tissue>
    </source>
</reference>
<reference key="2">
    <citation type="journal article" date="2000" name="Nature">
        <title>Sequence and analysis of chromosome 5 of the plant Arabidopsis thaliana.</title>
        <authorList>
            <person name="Tabata S."/>
            <person name="Kaneko T."/>
            <person name="Nakamura Y."/>
            <person name="Kotani H."/>
            <person name="Kato T."/>
            <person name="Asamizu E."/>
            <person name="Miyajima N."/>
            <person name="Sasamoto S."/>
            <person name="Kimura T."/>
            <person name="Hosouchi T."/>
            <person name="Kawashima K."/>
            <person name="Kohara M."/>
            <person name="Matsumoto M."/>
            <person name="Matsuno A."/>
            <person name="Muraki A."/>
            <person name="Nakayama S."/>
            <person name="Nakazaki N."/>
            <person name="Naruo K."/>
            <person name="Okumura S."/>
            <person name="Shinpo S."/>
            <person name="Takeuchi C."/>
            <person name="Wada T."/>
            <person name="Watanabe A."/>
            <person name="Yamada M."/>
            <person name="Yasuda M."/>
            <person name="Sato S."/>
            <person name="de la Bastide M."/>
            <person name="Huang E."/>
            <person name="Spiegel L."/>
            <person name="Gnoj L."/>
            <person name="O'Shaughnessy A."/>
            <person name="Preston R."/>
            <person name="Habermann K."/>
            <person name="Murray J."/>
            <person name="Johnson D."/>
            <person name="Rohlfing T."/>
            <person name="Nelson J."/>
            <person name="Stoneking T."/>
            <person name="Pepin K."/>
            <person name="Spieth J."/>
            <person name="Sekhon M."/>
            <person name="Armstrong J."/>
            <person name="Becker M."/>
            <person name="Belter E."/>
            <person name="Cordum H."/>
            <person name="Cordes M."/>
            <person name="Courtney L."/>
            <person name="Courtney W."/>
            <person name="Dante M."/>
            <person name="Du H."/>
            <person name="Edwards J."/>
            <person name="Fryman J."/>
            <person name="Haakensen B."/>
            <person name="Lamar E."/>
            <person name="Latreille P."/>
            <person name="Leonard S."/>
            <person name="Meyer R."/>
            <person name="Mulvaney E."/>
            <person name="Ozersky P."/>
            <person name="Riley A."/>
            <person name="Strowmatt C."/>
            <person name="Wagner-McPherson C."/>
            <person name="Wollam A."/>
            <person name="Yoakum M."/>
            <person name="Bell M."/>
            <person name="Dedhia N."/>
            <person name="Parnell L."/>
            <person name="Shah R."/>
            <person name="Rodriguez M."/>
            <person name="Hoon See L."/>
            <person name="Vil D."/>
            <person name="Baker J."/>
            <person name="Kirchoff K."/>
            <person name="Toth K."/>
            <person name="King L."/>
            <person name="Bahret A."/>
            <person name="Miller B."/>
            <person name="Marra M.A."/>
            <person name="Martienssen R."/>
            <person name="McCombie W.R."/>
            <person name="Wilson R.K."/>
            <person name="Murphy G."/>
            <person name="Bancroft I."/>
            <person name="Volckaert G."/>
            <person name="Wambutt R."/>
            <person name="Duesterhoeft A."/>
            <person name="Stiekema W."/>
            <person name="Pohl T."/>
            <person name="Entian K.-D."/>
            <person name="Terryn N."/>
            <person name="Hartley N."/>
            <person name="Bent E."/>
            <person name="Johnson S."/>
            <person name="Langham S.-A."/>
            <person name="McCullagh B."/>
            <person name="Robben J."/>
            <person name="Grymonprez B."/>
            <person name="Zimmermann W."/>
            <person name="Ramsperger U."/>
            <person name="Wedler H."/>
            <person name="Balke K."/>
            <person name="Wedler E."/>
            <person name="Peters S."/>
            <person name="van Staveren M."/>
            <person name="Dirkse W."/>
            <person name="Mooijman P."/>
            <person name="Klein Lankhorst R."/>
            <person name="Weitzenegger T."/>
            <person name="Bothe G."/>
            <person name="Rose M."/>
            <person name="Hauf J."/>
            <person name="Berneiser S."/>
            <person name="Hempel S."/>
            <person name="Feldpausch M."/>
            <person name="Lamberth S."/>
            <person name="Villarroel R."/>
            <person name="Gielen J."/>
            <person name="Ardiles W."/>
            <person name="Bents O."/>
            <person name="Lemcke K."/>
            <person name="Kolesov G."/>
            <person name="Mayer K.F.X."/>
            <person name="Rudd S."/>
            <person name="Schoof H."/>
            <person name="Schueller C."/>
            <person name="Zaccaria P."/>
            <person name="Mewes H.-W."/>
            <person name="Bevan M."/>
            <person name="Fransz P.F."/>
        </authorList>
    </citation>
    <scope>NUCLEOTIDE SEQUENCE [LARGE SCALE GENOMIC DNA]</scope>
    <source>
        <strain>cv. Columbia</strain>
    </source>
</reference>
<reference key="3">
    <citation type="journal article" date="2017" name="Plant J.">
        <title>Araport11: a complete reannotation of the Arabidopsis thaliana reference genome.</title>
        <authorList>
            <person name="Cheng C.Y."/>
            <person name="Krishnakumar V."/>
            <person name="Chan A.P."/>
            <person name="Thibaud-Nissen F."/>
            <person name="Schobel S."/>
            <person name="Town C.D."/>
        </authorList>
    </citation>
    <scope>GENOME REANNOTATION</scope>
    <source>
        <strain>cv. Columbia</strain>
    </source>
</reference>
<reference key="4">
    <citation type="journal article" date="1999" name="Development">
        <title>PETAL LOSS gene regulates initiation and orientation of second whorl organs in the Arabidopsis flower.</title>
        <authorList>
            <person name="Griffith M.E."/>
            <person name="da Silva Conceicao A."/>
            <person name="Smyth D.R."/>
        </authorList>
    </citation>
    <scope>FUNCTION</scope>
    <scope>DISRUPTION PHENOTYPE</scope>
    <source>
        <strain>cv. C24</strain>
        <strain>cv. Columbia</strain>
    </source>
</reference>
<reference key="5">
    <citation type="journal article" date="2008" name="Plant Mol. Biol.">
        <title>A gain-of-function mutation of transcriptional factor PTL results in curly leaves, dwarfism and male sterility by affecting auxin homeostasis.</title>
        <authorList>
            <person name="Li X."/>
            <person name="Qin G."/>
            <person name="Chen Z."/>
            <person name="Gu H."/>
            <person name="Qu L.-J."/>
        </authorList>
    </citation>
    <scope>FUNCTION</scope>
    <source>
        <strain>cv. Columbia</strain>
    </source>
</reference>
<reference key="6">
    <citation type="journal article" date="2015" name="J. Exp. Bot.">
        <title>PETAL LOSS, a trihelix transcription factor that represses growth in Arabidopsis thaliana, binds the energy-sensing SnRK1 kinase AKIN10.</title>
        <authorList>
            <person name="O'Brien M."/>
            <person name="Kaplan-Levy R.N."/>
            <person name="Quon T."/>
            <person name="Sappl P.G."/>
            <person name="Smyth D.R."/>
        </authorList>
    </citation>
    <scope>INTERACTION WITH KIN10</scope>
    <scope>TISSUE SPECIFICITY</scope>
</reference>
<evidence type="ECO:0000255" key="1">
    <source>
        <dbReference type="PROSITE-ProRule" id="PRU00133"/>
    </source>
</evidence>
<evidence type="ECO:0000256" key="2">
    <source>
        <dbReference type="SAM" id="MobiDB-lite"/>
    </source>
</evidence>
<evidence type="ECO:0000269" key="3">
    <source>
    </source>
</evidence>
<evidence type="ECO:0000269" key="4">
    <source>
    </source>
</evidence>
<evidence type="ECO:0000269" key="5">
    <source>
    </source>
</evidence>
<evidence type="ECO:0000269" key="6">
    <source>
    </source>
</evidence>
<evidence type="ECO:0000305" key="7"/>
<comment type="function">
    <text evidence="3 4 5">Transcription factor that prevents growth. Regulates perianth architecture in flower, mostly in the second whorl, probably by suppressing growth between initiating sepals, ensuring that they remain separate, and by modulating organ shapes. Required for the establishment of auxin flux.</text>
</comment>
<comment type="subunit">
    <text evidence="6">Interacts with KIN10.</text>
</comment>
<comment type="subcellular location">
    <subcellularLocation>
        <location>Nucleus</location>
    </subcellularLocation>
</comment>
<comment type="tissue specificity">
    <text evidence="4 6">Confined to flowers, at low levels. Also present in 7-days-old seedlings. Barely detectable in other tissues such as young seedlings, roots, stems, leaves and siliques (PubMed:15269176). Expressed in flower primordia, more precisely between newly arisen sepal primordia and also at the basal margins of developing sepals (PubMed:25697797).</text>
</comment>
<comment type="developmental stage">
    <text evidence="4">First observed in the early-developing flower, in four zones between the initiating sepals and in their developing margins. Later detected in the margins of expanding sepals, petals and stamens, and in the leaf margins.</text>
</comment>
<comment type="induction">
    <text evidence="4">Expression within the newly arising sepals is repressed via the PINOID auxin-response pathway.</text>
</comment>
<comment type="disruption phenotype">
    <text evidence="3 4">Disrupted perianth development, particularly petal initiation and orientation, sometimes leading to petal fusion.</text>
</comment>
<protein>
    <recommendedName>
        <fullName>Trihelix transcription factor PTL</fullName>
    </recommendedName>
    <alternativeName>
        <fullName>Trihelix DNA-binding protein PETAL LOSS</fullName>
    </alternativeName>
</protein>
<feature type="chain" id="PRO_0000421377" description="Trihelix transcription factor PTL">
    <location>
        <begin position="1"/>
        <end position="591"/>
    </location>
</feature>
<feature type="domain" description="Myb-like 1" evidence="1">
    <location>
        <begin position="118"/>
        <end position="177"/>
    </location>
</feature>
<feature type="domain" description="Myb-like 2" evidence="1">
    <location>
        <begin position="422"/>
        <end position="479"/>
    </location>
</feature>
<feature type="region of interest" description="Disordered" evidence="2">
    <location>
        <begin position="1"/>
        <end position="32"/>
    </location>
</feature>
<feature type="region of interest" description="Disordered" evidence="2">
    <location>
        <begin position="380"/>
        <end position="410"/>
    </location>
</feature>
<feature type="region of interest" description="Disordered" evidence="2">
    <location>
        <begin position="491"/>
        <end position="551"/>
    </location>
</feature>
<feature type="compositionally biased region" description="Polar residues" evidence="2">
    <location>
        <begin position="388"/>
        <end position="410"/>
    </location>
</feature>
<feature type="compositionally biased region" description="Polar residues" evidence="2">
    <location>
        <begin position="515"/>
        <end position="534"/>
    </location>
</feature>
<feature type="compositionally biased region" description="Low complexity" evidence="2">
    <location>
        <begin position="535"/>
        <end position="551"/>
    </location>
</feature>
<feature type="sequence conflict" description="In Ref. 1; AAS64746." evidence="7" ref="1">
    <original>A</original>
    <variation>V</variation>
    <location>
        <position position="459"/>
    </location>
</feature>
<accession>Q9LZS0</accession>
<accession>Q6Q6T0</accession>
<keyword id="KW-0217">Developmental protein</keyword>
<keyword id="KW-0238">DNA-binding</keyword>
<keyword id="KW-0341">Growth regulation</keyword>
<keyword id="KW-0539">Nucleus</keyword>
<keyword id="KW-1185">Reference proteome</keyword>
<keyword id="KW-0677">Repeat</keyword>
<keyword id="KW-0804">Transcription</keyword>
<keyword id="KW-0805">Transcription regulation</keyword>
<gene>
    <name type="primary">PTL</name>
    <name type="ordered locus">At5g03680</name>
    <name type="ORF">F17C15.100</name>
</gene>
<proteinExistence type="evidence at protein level"/>
<sequence length="591" mass="66639">MDQDQHPQYGIPELRQLMKGGGRTTTTTPSTSSHFPSDFFGFNLAPVQPPPHRLHQFTTDQDMGFLPRGIHGLGGGSSTAGNNSNLNASTSGGGVGFSGFLDGGGFGSGVGGDGGGTGRWPRQETLTLLEIRSRLDHKFKEANQKGPLWDEVSRIMSEEHGYQRSGKKCREKFENLYKYYRKTKEGKAGRQDGKHYRFFRQLEALYGDSNNLVSCPNHNTQFMSSALHGFHTQNPMNVTTTTSNIHNVDSVHGFHQSLSLSNNYNSSELELMTSSSEGNDSSSRRKKRSWKAKIKEFIDTNMKRLIERQDVWLEKLTKVIEDKEEQRMMKEEEWRKIEAARIDKEHLFWAKERARMEARDVAVIEALQYLTGKPLIKPLCSSPEERTNGNNEIRNNSETQNENGSDQTMTNNVCVKGSSSCWGEQEILKLMEIRTSMDSTFQEILGGCSDEFLWEEIAAKLIQLGFDQRSALLCKEKWEWISNGMRKEKKQINKKRKDNSSSCGVYYPRNEENPIYNNRESGYNDNDPHQINEQGNVGSSTSNANANANVTTGNPSGAMAASTNCFPFFMGDGDQNLWESYGLRLSKEENQ</sequence>